<sequence>MANITVTFTITEFCLHTGVTEEELNEIVGLGVIEPYEDDNADWQFDDRAASVVQRALRLREELALDWPGIAVALTLLEENSRLREENRLLLQRLSRFISHP</sequence>
<protein>
    <recommendedName>
        <fullName evidence="1">Chaperone modulatory protein CbpM</fullName>
    </recommendedName>
</protein>
<organism>
    <name type="scientific">Salmonella paratyphi C (strain RKS4594)</name>
    <dbReference type="NCBI Taxonomy" id="476213"/>
    <lineage>
        <taxon>Bacteria</taxon>
        <taxon>Pseudomonadati</taxon>
        <taxon>Pseudomonadota</taxon>
        <taxon>Gammaproteobacteria</taxon>
        <taxon>Enterobacterales</taxon>
        <taxon>Enterobacteriaceae</taxon>
        <taxon>Salmonella</taxon>
    </lineage>
</organism>
<feature type="chain" id="PRO_1000164292" description="Chaperone modulatory protein CbpM">
    <location>
        <begin position="1"/>
        <end position="101"/>
    </location>
</feature>
<reference key="1">
    <citation type="journal article" date="2009" name="PLoS ONE">
        <title>Salmonella paratyphi C: genetic divergence from Salmonella choleraesuis and pathogenic convergence with Salmonella typhi.</title>
        <authorList>
            <person name="Liu W.-Q."/>
            <person name="Feng Y."/>
            <person name="Wang Y."/>
            <person name="Zou Q.-H."/>
            <person name="Chen F."/>
            <person name="Guo J.-T."/>
            <person name="Peng Y.-H."/>
            <person name="Jin Y."/>
            <person name="Li Y.-G."/>
            <person name="Hu S.-N."/>
            <person name="Johnston R.N."/>
            <person name="Liu G.-R."/>
            <person name="Liu S.-L."/>
        </authorList>
    </citation>
    <scope>NUCLEOTIDE SEQUENCE [LARGE SCALE GENOMIC DNA]</scope>
    <source>
        <strain>RKS4594</strain>
    </source>
</reference>
<proteinExistence type="inferred from homology"/>
<name>CBPM_SALPC</name>
<evidence type="ECO:0000255" key="1">
    <source>
        <dbReference type="HAMAP-Rule" id="MF_01155"/>
    </source>
</evidence>
<comment type="function">
    <text evidence="1">Interacts with CbpA and inhibits both the DnaJ-like co-chaperone activity and the DNA binding activity of CbpA. Together with CbpA, modulates the activity of the DnaK chaperone system. Does not inhibit the co-chaperone activity of DnaJ.</text>
</comment>
<comment type="similarity">
    <text evidence="1">Belongs to the CbpM family.</text>
</comment>
<dbReference type="EMBL" id="CP000857">
    <property type="protein sequence ID" value="ACN46739.1"/>
    <property type="molecule type" value="Genomic_DNA"/>
</dbReference>
<dbReference type="RefSeq" id="WP_001284251.1">
    <property type="nucleotide sequence ID" value="NC_012125.1"/>
</dbReference>
<dbReference type="SMR" id="C0Q894"/>
<dbReference type="KEGG" id="sei:SPC_2638"/>
<dbReference type="HOGENOM" id="CLU_144710_3_1_6"/>
<dbReference type="Proteomes" id="UP000001599">
    <property type="component" value="Chromosome"/>
</dbReference>
<dbReference type="Gene3D" id="1.10.1660.10">
    <property type="match status" value="1"/>
</dbReference>
<dbReference type="HAMAP" id="MF_01155">
    <property type="entry name" value="CbpM"/>
    <property type="match status" value="1"/>
</dbReference>
<dbReference type="InterPro" id="IPR022835">
    <property type="entry name" value="CbpM"/>
</dbReference>
<dbReference type="NCBIfam" id="NF007617">
    <property type="entry name" value="PRK10265.1"/>
    <property type="match status" value="1"/>
</dbReference>
<dbReference type="Pfam" id="PF13591">
    <property type="entry name" value="MerR_2"/>
    <property type="match status" value="1"/>
</dbReference>
<gene>
    <name evidence="1" type="primary">cbpM</name>
    <name type="ordered locus">SPC_2638</name>
</gene>
<accession>C0Q894</accession>